<comment type="function">
    <text evidence="1">Plays a role in virus cell tropism, and may be required for efficient virus replication in macrophages.</text>
</comment>
<comment type="similarity">
    <text evidence="2">Belongs to the asfivirus MGF 505 family.</text>
</comment>
<keyword id="KW-0040">ANK repeat</keyword>
<keyword id="KW-0677">Repeat</keyword>
<sequence>MFSLQDLCRKNIFFLPNDFSKHTLQWLGLYWKEHGSVHRAEKNSIVIQNELVLSINDALQLAGEEGDTDVVQLLLLWEGNLHYAIIGALKTEKYNLICEYHSQIQDWHVLLPLIQDPETFEKCHDLSLACDFICLLQHAVKYNMLSILVKYKEDLLNVRIRYRIQSLFVLACENRRIEIIDWIGQNLPIPEPDAIFSIAVATRDLELFSLGYKIIFDYMQRQGIFQLSNGVRMVVLNRHISMAIDNGLLPFVLETLKHGGNIHRALSYAVTHNRRKILDYLIRQKNIAPNTIERLLYLAVKNQSSRKTLNLLLSYINYKVKNVKKLVEHVVNEKSTLVLKILLEKKENLVDAVLTRLVKHSTYFQVREFIQEFSISPEKFIKIAVREKKNVLIEAISEDIWENPTERITYLKQIVHTIKYESGRRFLIDIIHSIYQSYSLKHEDILKLATFYVKYNAITHFKDLCKYLWLNRGTESKKLFLECLEIADEKEFPDIKSIVSEYINYLFTAGAITKEEIMQAYDALE</sequence>
<accession>P0C9U1</accession>
<proteinExistence type="inferred from homology"/>
<evidence type="ECO:0000250" key="1"/>
<evidence type="ECO:0000305" key="2"/>
<organismHost>
    <name type="scientific">Ornithodoros</name>
    <name type="common">relapsing fever ticks</name>
    <dbReference type="NCBI Taxonomy" id="6937"/>
</organismHost>
<organismHost>
    <name type="scientific">Phacochoerus aethiopicus</name>
    <name type="common">Warthog</name>
    <dbReference type="NCBI Taxonomy" id="85517"/>
</organismHost>
<organismHost>
    <name type="scientific">Phacochoerus africanus</name>
    <name type="common">Warthog</name>
    <dbReference type="NCBI Taxonomy" id="41426"/>
</organismHost>
<organismHost>
    <name type="scientific">Potamochoerus larvatus</name>
    <name type="common">Bushpig</name>
    <dbReference type="NCBI Taxonomy" id="273792"/>
</organismHost>
<organismHost>
    <name type="scientific">Sus scrofa</name>
    <name type="common">Pig</name>
    <dbReference type="NCBI Taxonomy" id="9823"/>
</organismHost>
<feature type="chain" id="PRO_0000373338" description="Protein MGF 505-6R">
    <location>
        <begin position="1"/>
        <end position="525"/>
    </location>
</feature>
<feature type="repeat" description="ANK 1">
    <location>
        <begin position="54"/>
        <end position="83"/>
    </location>
</feature>
<feature type="repeat" description="ANK 2">
    <location>
        <begin position="129"/>
        <end position="158"/>
    </location>
</feature>
<feature type="repeat" description="ANK 3">
    <location>
        <begin position="261"/>
        <end position="291"/>
    </location>
</feature>
<feature type="repeat" description="ANK 4">
    <location>
        <begin position="324"/>
        <end position="351"/>
    </location>
</feature>
<name>5056R_ASFWA</name>
<reference key="1">
    <citation type="submission" date="2003-03" db="EMBL/GenBank/DDBJ databases">
        <title>African swine fever virus genomes.</title>
        <authorList>
            <person name="Kutish G.F."/>
            <person name="Rock D.L."/>
        </authorList>
    </citation>
    <scope>NUCLEOTIDE SEQUENCE [LARGE SCALE GENOMIC DNA]</scope>
</reference>
<protein>
    <recommendedName>
        <fullName>Protein MGF 505-6R</fullName>
    </recommendedName>
</protein>
<gene>
    <name type="ordered locus">War-040</name>
</gene>
<dbReference type="EMBL" id="AY261366">
    <property type="status" value="NOT_ANNOTATED_CDS"/>
    <property type="molecule type" value="Genomic_DNA"/>
</dbReference>
<dbReference type="SMR" id="P0C9U1"/>
<dbReference type="Proteomes" id="UP000000858">
    <property type="component" value="Segment"/>
</dbReference>
<dbReference type="Gene3D" id="1.25.40.20">
    <property type="entry name" value="Ankyrin repeat-containing domain"/>
    <property type="match status" value="1"/>
</dbReference>
<dbReference type="InterPro" id="IPR036770">
    <property type="entry name" value="Ankyrin_rpt-contain_sf"/>
</dbReference>
<dbReference type="InterPro" id="IPR004858">
    <property type="entry name" value="MGF_505"/>
</dbReference>
<dbReference type="Pfam" id="PF03158">
    <property type="entry name" value="DUF249"/>
    <property type="match status" value="1"/>
</dbReference>
<organism>
    <name type="scientific">African swine fever virus (isolate Warthog/Namibia/Wart80/1980)</name>
    <name type="common">ASFV</name>
    <dbReference type="NCBI Taxonomy" id="561444"/>
    <lineage>
        <taxon>Viruses</taxon>
        <taxon>Varidnaviria</taxon>
        <taxon>Bamfordvirae</taxon>
        <taxon>Nucleocytoviricota</taxon>
        <taxon>Pokkesviricetes</taxon>
        <taxon>Asfuvirales</taxon>
        <taxon>Asfarviridae</taxon>
        <taxon>Asfivirus</taxon>
        <taxon>African swine fever virus</taxon>
    </lineage>
</organism>